<sequence>MAEGQVLVLDGRGHLLGRLAAIVAKQVLLGRKVVVVRCEGINISGNFYRNKLKYLAFLRKRMNTNPSRGPYHFRAPSRIFWRTVRGMLPHKTKRGQAALDRLKVFDGIPPPYDKKKRMVVPAALKVVRLKPTRKFAYLGRLAHEVGWKYQAVTATLEEKRKEKAKIHYRKKKQLMRLRKQAEKNVEKKISKFTDVLKTHGLLV</sequence>
<reference key="1">
    <citation type="journal article" date="2011" name="Nature">
        <title>A high-resolution map of human evolutionary constraint using 29 mammals.</title>
        <authorList>
            <person name="Lindblad-Toh K."/>
            <person name="Garber M."/>
            <person name="Zuk O."/>
            <person name="Lin M.F."/>
            <person name="Parker B.J."/>
            <person name="Washietl S."/>
            <person name="Kheradpour P."/>
            <person name="Ernst J."/>
            <person name="Jordan G."/>
            <person name="Mauceli E."/>
            <person name="Ward L.D."/>
            <person name="Lowe C.B."/>
            <person name="Holloway A.K."/>
            <person name="Clamp M."/>
            <person name="Gnerre S."/>
            <person name="Alfoldi J."/>
            <person name="Beal K."/>
            <person name="Chang J."/>
            <person name="Clawson H."/>
            <person name="Cuff J."/>
            <person name="Di Palma F."/>
            <person name="Fitzgerald S."/>
            <person name="Flicek P."/>
            <person name="Guttman M."/>
            <person name="Hubisz M.J."/>
            <person name="Jaffe D.B."/>
            <person name="Jungreis I."/>
            <person name="Kent W.J."/>
            <person name="Kostka D."/>
            <person name="Lara M."/>
            <person name="Martins A.L."/>
            <person name="Massingham T."/>
            <person name="Moltke I."/>
            <person name="Raney B.J."/>
            <person name="Rasmussen M.D."/>
            <person name="Robinson J."/>
            <person name="Stark A."/>
            <person name="Vilella A.J."/>
            <person name="Wen J."/>
            <person name="Xie X."/>
            <person name="Zody M.C."/>
            <person name="Baldwin J."/>
            <person name="Bloom T."/>
            <person name="Chin C.W."/>
            <person name="Heiman D."/>
            <person name="Nicol R."/>
            <person name="Nusbaum C."/>
            <person name="Young S."/>
            <person name="Wilkinson J."/>
            <person name="Worley K.C."/>
            <person name="Kovar C.L."/>
            <person name="Muzny D.M."/>
            <person name="Gibbs R.A."/>
            <person name="Cree A."/>
            <person name="Dihn H.H."/>
            <person name="Fowler G."/>
            <person name="Jhangiani S."/>
            <person name="Joshi V."/>
            <person name="Lee S."/>
            <person name="Lewis L.R."/>
            <person name="Nazareth L.V."/>
            <person name="Okwuonu G."/>
            <person name="Santibanez J."/>
            <person name="Warren W.C."/>
            <person name="Mardis E.R."/>
            <person name="Weinstock G.M."/>
            <person name="Wilson R.K."/>
            <person name="Delehaunty K."/>
            <person name="Dooling D."/>
            <person name="Fronik C."/>
            <person name="Fulton L."/>
            <person name="Fulton B."/>
            <person name="Graves T."/>
            <person name="Minx P."/>
            <person name="Sodergren E."/>
            <person name="Birney E."/>
            <person name="Margulies E.H."/>
            <person name="Herrero J."/>
            <person name="Green E.D."/>
            <person name="Haussler D."/>
            <person name="Siepel A."/>
            <person name="Goldman N."/>
            <person name="Pollard K.S."/>
            <person name="Pedersen J.S."/>
            <person name="Lander E.S."/>
            <person name="Kellis M."/>
        </authorList>
    </citation>
    <scope>NUCLEOTIDE SEQUENCE [LARGE SCALE GENOMIC DNA]</scope>
    <source>
        <strain>Thorbecke</strain>
    </source>
</reference>
<reference evidence="7 8" key="2">
    <citation type="journal article" date="2022" name="Science">
        <title>Structure of the mammalian ribosome as it decodes the selenocysteine UGA codon.</title>
        <authorList>
            <person name="Hilal T."/>
            <person name="Killam B.Y."/>
            <person name="Grozdanovic M."/>
            <person name="Dobosz-Bartoszek M."/>
            <person name="Loerke J."/>
            <person name="Buerger J."/>
            <person name="Mielke T."/>
            <person name="Copeland P.R."/>
            <person name="Simonovic M."/>
            <person name="Spahn C.M.T."/>
        </authorList>
    </citation>
    <scope>STRUCTURE BY ELECTRON MICROSCOPY (2.80 ANGSTROMS) OF RIBOSOME</scope>
    <scope>SUBCELLULAR LOCATION</scope>
    <scope>SUBUNIT</scope>
</reference>
<reference evidence="6" key="3">
    <citation type="journal article" date="2023" name="Nature">
        <title>A molecular network of conserved factors keeps ribosomes dormant in the egg.</title>
        <authorList>
            <person name="Leesch F."/>
            <person name="Lorenzo-Orts L."/>
            <person name="Pribitzer C."/>
            <person name="Grishkovskaya I."/>
            <person name="Roehsner J."/>
            <person name="Chugunova A."/>
            <person name="Matzinger M."/>
            <person name="Roitinger E."/>
            <person name="Belacic K."/>
            <person name="Kandolf S."/>
            <person name="Lin T.Y."/>
            <person name="Mechtler K."/>
            <person name="Meinhart A."/>
            <person name="Haselbach D."/>
            <person name="Pauli A."/>
        </authorList>
    </citation>
    <scope>STRUCTURE BY ELECTRON MICROSCOPY (2.30 ANGSTROMS) OF RIBOSOME</scope>
    <scope>SUBCELLULAR LOCATION</scope>
    <scope>SUBUNIT</scope>
</reference>
<dbReference type="RefSeq" id="XP_002723961.2">
    <property type="nucleotide sequence ID" value="XM_002723915.3"/>
</dbReference>
<dbReference type="RefSeq" id="XP_051696654.1">
    <property type="nucleotide sequence ID" value="XM_051840694.2"/>
</dbReference>
<dbReference type="PDB" id="7OYD">
    <property type="method" value="EM"/>
    <property type="resolution" value="2.30 A"/>
    <property type="chains" value="O=1-203"/>
</dbReference>
<dbReference type="PDB" id="7ZJW">
    <property type="method" value="EM"/>
    <property type="resolution" value="2.80 A"/>
    <property type="chains" value="LR=1-203"/>
</dbReference>
<dbReference type="PDB" id="7ZJX">
    <property type="method" value="EM"/>
    <property type="resolution" value="3.10 A"/>
    <property type="chains" value="LR=1-203"/>
</dbReference>
<dbReference type="PDB" id="8B5L">
    <property type="method" value="EM"/>
    <property type="resolution" value="2.86 A"/>
    <property type="chains" value="O=1-203"/>
</dbReference>
<dbReference type="PDB" id="8B6C">
    <property type="method" value="EM"/>
    <property type="resolution" value="2.79 A"/>
    <property type="chains" value="O=1-203"/>
</dbReference>
<dbReference type="PDB" id="8BTK">
    <property type="method" value="EM"/>
    <property type="resolution" value="3.50 A"/>
    <property type="chains" value="BO=1-203"/>
</dbReference>
<dbReference type="PDB" id="8P2K">
    <property type="method" value="EM"/>
    <property type="resolution" value="2.90 A"/>
    <property type="chains" value="BO=1-203"/>
</dbReference>
<dbReference type="PDB" id="8RJB">
    <property type="method" value="EM"/>
    <property type="resolution" value="2.69 A"/>
    <property type="chains" value="O=1-203"/>
</dbReference>
<dbReference type="PDB" id="8RJC">
    <property type="method" value="EM"/>
    <property type="resolution" value="2.90 A"/>
    <property type="chains" value="O=1-203"/>
</dbReference>
<dbReference type="PDB" id="8RJD">
    <property type="method" value="EM"/>
    <property type="resolution" value="2.79 A"/>
    <property type="chains" value="O=1-203"/>
</dbReference>
<dbReference type="PDB" id="8VFT">
    <property type="method" value="EM"/>
    <property type="resolution" value="3.30 A"/>
    <property type="chains" value="O=1-203"/>
</dbReference>
<dbReference type="PDB" id="9BDL">
    <property type="method" value="EM"/>
    <property type="resolution" value="2.80 A"/>
    <property type="chains" value="AL16=5-203"/>
</dbReference>
<dbReference type="PDB" id="9BDN">
    <property type="method" value="EM"/>
    <property type="resolution" value="3.10 A"/>
    <property type="chains" value="AL16=5-203"/>
</dbReference>
<dbReference type="PDB" id="9BDP">
    <property type="method" value="EM"/>
    <property type="resolution" value="3.70 A"/>
    <property type="chains" value="AL16=5-203"/>
</dbReference>
<dbReference type="PDB" id="9F1B">
    <property type="method" value="EM"/>
    <property type="resolution" value="3.01 A"/>
    <property type="chains" value="BO=1-203"/>
</dbReference>
<dbReference type="PDB" id="9F1C">
    <property type="method" value="EM"/>
    <property type="resolution" value="3.78 A"/>
    <property type="chains" value="BO=1-203"/>
</dbReference>
<dbReference type="PDB" id="9F1D">
    <property type="method" value="EM"/>
    <property type="resolution" value="3.26 A"/>
    <property type="chains" value="BO=1-203"/>
</dbReference>
<dbReference type="PDBsum" id="7OYD"/>
<dbReference type="PDBsum" id="7ZJW"/>
<dbReference type="PDBsum" id="7ZJX"/>
<dbReference type="PDBsum" id="8B5L"/>
<dbReference type="PDBsum" id="8B6C"/>
<dbReference type="PDBsum" id="8BTK"/>
<dbReference type="PDBsum" id="8P2K"/>
<dbReference type="PDBsum" id="8RJB"/>
<dbReference type="PDBsum" id="8RJC"/>
<dbReference type="PDBsum" id="8RJD"/>
<dbReference type="PDBsum" id="8VFT"/>
<dbReference type="PDBsum" id="9BDL"/>
<dbReference type="PDBsum" id="9BDN"/>
<dbReference type="PDBsum" id="9BDP"/>
<dbReference type="PDBsum" id="9F1B"/>
<dbReference type="PDBsum" id="9F1C"/>
<dbReference type="PDBsum" id="9F1D"/>
<dbReference type="EMDB" id="EMD-0099"/>
<dbReference type="EMDB" id="EMD-0100"/>
<dbReference type="EMDB" id="EMD-0192"/>
<dbReference type="EMDB" id="EMD-0194"/>
<dbReference type="EMDB" id="EMD-0195"/>
<dbReference type="EMDB" id="EMD-0197"/>
<dbReference type="EMDB" id="EMD-10181"/>
<dbReference type="EMDB" id="EMD-10380"/>
<dbReference type="EMDB" id="EMD-12303"/>
<dbReference type="EMDB" id="EMD-12633"/>
<dbReference type="EMDB" id="EMD-13114"/>
<dbReference type="EMDB" id="EMD-15860"/>
<dbReference type="EMDB" id="EMD-15863"/>
<dbReference type="EMDB" id="EMD-20255"/>
<dbReference type="EMDB" id="EMD-20256"/>
<dbReference type="EMDB" id="EMD-20257"/>
<dbReference type="EMDB" id="EMD-20258"/>
<dbReference type="EMDB" id="EMD-23785"/>
<dbReference type="EMDB" id="EMD-25994"/>
<dbReference type="EMDB" id="EMD-26035"/>
<dbReference type="EMDB" id="EMD-26036"/>
<dbReference type="EMDB" id="EMD-26133"/>
<dbReference type="EMDB" id="EMD-40344"/>
<dbReference type="EMDB" id="EMD-4130"/>
<dbReference type="EMDB" id="EMD-4131"/>
<dbReference type="EMDB" id="EMD-4132"/>
<dbReference type="EMDB" id="EMD-4133"/>
<dbReference type="EMDB" id="EMD-4134"/>
<dbReference type="EMDB" id="EMD-4135"/>
<dbReference type="EMDB" id="EMD-4136"/>
<dbReference type="EMDB" id="EMD-4137"/>
<dbReference type="EMDB" id="EMD-4300"/>
<dbReference type="EMDB" id="EMD-4315"/>
<dbReference type="EMDB" id="EMD-4316"/>
<dbReference type="EMDB" id="EMD-4317"/>
<dbReference type="EMDB" id="EMD-43189"/>
<dbReference type="EMDB" id="EMD-44461"/>
<dbReference type="EMDB" id="EMD-44463"/>
<dbReference type="EMDB" id="EMD-44464"/>
<dbReference type="EMDB" id="EMD-4729"/>
<dbReference type="EMDB" id="EMD-4737"/>
<dbReference type="EMDB" id="EMD-4745"/>
<dbReference type="EMDB" id="EMD-50124"/>
<dbReference type="EMDB" id="EMD-50125"/>
<dbReference type="EMDB" id="EMD-50126"/>
<dbReference type="EMDB" id="EMD-7834"/>
<dbReference type="EMDB" id="EMD-7836"/>
<dbReference type="EMDB" id="EMD-9240"/>
<dbReference type="EMDB" id="EMD-9242"/>
<dbReference type="SMR" id="G1TVS8"/>
<dbReference type="FunCoup" id="G1TVS8">
    <property type="interactions" value="959"/>
</dbReference>
<dbReference type="IntAct" id="G1TVS8">
    <property type="interactions" value="1"/>
</dbReference>
<dbReference type="STRING" id="9986.ENSOCUP00000021167"/>
<dbReference type="PaxDb" id="9986-ENSOCUP00000021167"/>
<dbReference type="GeneID" id="100340045"/>
<dbReference type="eggNOG" id="KOG3204">
    <property type="taxonomic scope" value="Eukaryota"/>
</dbReference>
<dbReference type="HOGENOM" id="CLU_076922_2_1_1"/>
<dbReference type="InParanoid" id="G1TVS8"/>
<dbReference type="TreeFam" id="TF300159"/>
<dbReference type="Proteomes" id="UP000001811">
    <property type="component" value="Unplaced"/>
</dbReference>
<dbReference type="Bgee" id="ENSOCUG00000025258">
    <property type="expression patterns" value="Expressed in autopod skin and 15 other cell types or tissues"/>
</dbReference>
<dbReference type="GO" id="GO:0022625">
    <property type="term" value="C:cytosolic large ribosomal subunit"/>
    <property type="evidence" value="ECO:0007669"/>
    <property type="project" value="TreeGrafter"/>
</dbReference>
<dbReference type="GO" id="GO:0003729">
    <property type="term" value="F:mRNA binding"/>
    <property type="evidence" value="ECO:0007669"/>
    <property type="project" value="TreeGrafter"/>
</dbReference>
<dbReference type="GO" id="GO:0003735">
    <property type="term" value="F:structural constituent of ribosome"/>
    <property type="evidence" value="ECO:0007669"/>
    <property type="project" value="InterPro"/>
</dbReference>
<dbReference type="GO" id="GO:0017148">
    <property type="term" value="P:negative regulation of translation"/>
    <property type="evidence" value="ECO:0007669"/>
    <property type="project" value="TreeGrafter"/>
</dbReference>
<dbReference type="GO" id="GO:0006412">
    <property type="term" value="P:translation"/>
    <property type="evidence" value="ECO:0007669"/>
    <property type="project" value="InterPro"/>
</dbReference>
<dbReference type="CDD" id="cd00392">
    <property type="entry name" value="Ribosomal_L13"/>
    <property type="match status" value="1"/>
</dbReference>
<dbReference type="FunFam" id="6.10.250.3250:FF:000001">
    <property type="entry name" value="60S ribosomal protein L13a"/>
    <property type="match status" value="1"/>
</dbReference>
<dbReference type="FunFam" id="3.90.1180.10:FF:000002">
    <property type="entry name" value="60S ribosomal protein L16"/>
    <property type="match status" value="1"/>
</dbReference>
<dbReference type="Gene3D" id="6.10.250.3250">
    <property type="match status" value="1"/>
</dbReference>
<dbReference type="Gene3D" id="3.90.1180.10">
    <property type="entry name" value="Ribosomal protein L13"/>
    <property type="match status" value="1"/>
</dbReference>
<dbReference type="HAMAP" id="MF_01366">
    <property type="entry name" value="Ribosomal_uL13"/>
    <property type="match status" value="1"/>
</dbReference>
<dbReference type="InterPro" id="IPR005822">
    <property type="entry name" value="Ribosomal_uL13"/>
</dbReference>
<dbReference type="InterPro" id="IPR023563">
    <property type="entry name" value="Ribosomal_uL13_CS"/>
</dbReference>
<dbReference type="InterPro" id="IPR005755">
    <property type="entry name" value="Ribosomal_uL13_euk/arc"/>
</dbReference>
<dbReference type="InterPro" id="IPR036899">
    <property type="entry name" value="Ribosomal_uL13_sf"/>
</dbReference>
<dbReference type="NCBIfam" id="TIGR01077">
    <property type="entry name" value="L13_A_E"/>
    <property type="match status" value="1"/>
</dbReference>
<dbReference type="PANTHER" id="PTHR11545:SF3">
    <property type="entry name" value="LARGE RIBOSOMAL SUBUNIT PROTEIN UL13"/>
    <property type="match status" value="1"/>
</dbReference>
<dbReference type="PANTHER" id="PTHR11545">
    <property type="entry name" value="RIBOSOMAL PROTEIN L13"/>
    <property type="match status" value="1"/>
</dbReference>
<dbReference type="Pfam" id="PF00572">
    <property type="entry name" value="Ribosomal_L13"/>
    <property type="match status" value="1"/>
</dbReference>
<dbReference type="SUPFAM" id="SSF52161">
    <property type="entry name" value="Ribosomal protein L13"/>
    <property type="match status" value="1"/>
</dbReference>
<evidence type="ECO:0000250" key="1">
    <source>
        <dbReference type="UniProtKB" id="P19253"/>
    </source>
</evidence>
<evidence type="ECO:0000250" key="2">
    <source>
        <dbReference type="UniProtKB" id="P40429"/>
    </source>
</evidence>
<evidence type="ECO:0000269" key="3">
    <source>
    </source>
</evidence>
<evidence type="ECO:0000269" key="4">
    <source>
    </source>
</evidence>
<evidence type="ECO:0000305" key="5"/>
<evidence type="ECO:0007744" key="6">
    <source>
        <dbReference type="PDB" id="7OYD"/>
    </source>
</evidence>
<evidence type="ECO:0007744" key="7">
    <source>
        <dbReference type="PDB" id="7ZJW"/>
    </source>
</evidence>
<evidence type="ECO:0007744" key="8">
    <source>
        <dbReference type="PDB" id="7ZJX"/>
    </source>
</evidence>
<organism>
    <name type="scientific">Oryctolagus cuniculus</name>
    <name type="common">Rabbit</name>
    <dbReference type="NCBI Taxonomy" id="9986"/>
    <lineage>
        <taxon>Eukaryota</taxon>
        <taxon>Metazoa</taxon>
        <taxon>Chordata</taxon>
        <taxon>Craniata</taxon>
        <taxon>Vertebrata</taxon>
        <taxon>Euteleostomi</taxon>
        <taxon>Mammalia</taxon>
        <taxon>Eutheria</taxon>
        <taxon>Euarchontoglires</taxon>
        <taxon>Glires</taxon>
        <taxon>Lagomorpha</taxon>
        <taxon>Leporidae</taxon>
        <taxon>Oryctolagus</taxon>
    </lineage>
</organism>
<protein>
    <recommendedName>
        <fullName>Large ribosomal subunit protein uL13</fullName>
    </recommendedName>
    <alternativeName>
        <fullName>60S ribosomal protein L13a</fullName>
    </alternativeName>
</protein>
<comment type="function">
    <text evidence="2">Associated with ribosomes but is not required for canonical ribosome function and has extra-ribosomal functions. Component of the GAIT (gamma interferon-activated inhibitor of translation) complex which mediates interferon-gamma-induced transcript-selective translation inhibition in inflammation processes. Upon interferon-gamma activation and subsequent phosphorylation dissociates from the ribosome and assembles into the GAIT complex which binds to stem loop-containing GAIT elements in the 3'-UTR of diverse inflammatory mRNAs (such as ceruplasmin) and suppresses their translation. In the GAIT complex interacts with m7G cap-bound eIF4G at or near the eIF3-binding site and blocks the recruitment of the 43S ribosomal complex. Involved in methylation of rRNA.</text>
</comment>
<comment type="subunit">
    <text evidence="2 3 4">Component of the 60S ribosome (PubMed:35709277, PubMed:36653451). Component of the GAIT complex (By similarity). Interacts with EIF4G1 (By similarity).</text>
</comment>
<comment type="subcellular location">
    <subcellularLocation>
        <location evidence="3 4">Cytoplasm</location>
    </subcellularLocation>
</comment>
<comment type="PTM">
    <text evidence="2">Phosphorylation at Ser-77 upon interferon-gamma treatment in monocytes involves a DAPK1-DAPK3 kinase cascade and is causing release from the ribosome, association with the GAIT complex and subsequent involvement in transcript-selective translation inhibition.</text>
</comment>
<comment type="PTM">
    <text evidence="1">Citrullinated by PADI4.</text>
</comment>
<comment type="similarity">
    <text evidence="5">Belongs to the universal ribosomal protein uL13 family.</text>
</comment>
<proteinExistence type="evidence at protein level"/>
<keyword id="KW-0002">3D-structure</keyword>
<keyword id="KW-0007">Acetylation</keyword>
<keyword id="KW-0164">Citrullination</keyword>
<keyword id="KW-0963">Cytoplasm</keyword>
<keyword id="KW-0597">Phosphoprotein</keyword>
<keyword id="KW-1185">Reference proteome</keyword>
<keyword id="KW-0687">Ribonucleoprotein</keyword>
<keyword id="KW-0689">Ribosomal protein</keyword>
<keyword id="KW-0810">Translation regulation</keyword>
<gene>
    <name type="primary">RPL13A</name>
</gene>
<feature type="initiator methionine" description="Removed" evidence="2">
    <location>
        <position position="1"/>
    </location>
</feature>
<feature type="chain" id="PRO_0000460102" description="Large ribosomal subunit protein uL13">
    <location>
        <begin position="2"/>
        <end position="203"/>
    </location>
</feature>
<feature type="modified residue" description="N-acetylalanine" evidence="2">
    <location>
        <position position="2"/>
    </location>
</feature>
<feature type="modified residue" description="Citrulline" evidence="1">
    <location>
        <position position="59"/>
    </location>
</feature>
<feature type="modified residue" description="Phosphoserine" evidence="2">
    <location>
        <position position="77"/>
    </location>
</feature>
<feature type="modified residue" description="Citrulline" evidence="1">
    <location>
        <position position="140"/>
    </location>
</feature>
<feature type="modified residue" description="N6-acetyllysine" evidence="2">
    <location>
        <position position="191"/>
    </location>
</feature>
<name>RL13A_RABIT</name>
<accession>G1TVS8</accession>